<keyword id="KW-0349">Heme</keyword>
<keyword id="KW-0408">Iron</keyword>
<keyword id="KW-1017">Isopeptide bond</keyword>
<keyword id="KW-0472">Membrane</keyword>
<keyword id="KW-0479">Metal-binding</keyword>
<keyword id="KW-0503">Monooxygenase</keyword>
<keyword id="KW-0560">Oxidoreductase</keyword>
<keyword id="KW-1185">Reference proteome</keyword>
<keyword id="KW-0812">Transmembrane</keyword>
<keyword id="KW-1133">Transmembrane helix</keyword>
<keyword id="KW-0832">Ubl conjugation</keyword>
<evidence type="ECO:0000250" key="1">
    <source>
        <dbReference type="UniProtKB" id="Q96242"/>
    </source>
</evidence>
<evidence type="ECO:0000250" key="2">
    <source>
        <dbReference type="UniProtKB" id="Q9SZU1"/>
    </source>
</evidence>
<evidence type="ECO:0000255" key="3"/>
<evidence type="ECO:0000269" key="4">
    <source>
    </source>
</evidence>
<evidence type="ECO:0000303" key="5">
    <source>
    </source>
</evidence>
<evidence type="ECO:0000305" key="6"/>
<dbReference type="EC" id="1.14.-.-" evidence="6"/>
<dbReference type="EMBL" id="D78607">
    <property type="protein sequence ID" value="BAA28539.1"/>
    <property type="molecule type" value="mRNA"/>
</dbReference>
<dbReference type="EMBL" id="AL035601">
    <property type="protein sequence ID" value="CAB38210.1"/>
    <property type="molecule type" value="Genomic_DNA"/>
</dbReference>
<dbReference type="EMBL" id="AL161591">
    <property type="protein sequence ID" value="CAB80408.1"/>
    <property type="molecule type" value="Genomic_DNA"/>
</dbReference>
<dbReference type="EMBL" id="CP002687">
    <property type="protein sequence ID" value="AEE86792.1"/>
    <property type="molecule type" value="Genomic_DNA"/>
</dbReference>
<dbReference type="EMBL" id="AY039844">
    <property type="protein sequence ID" value="AAK63948.1"/>
    <property type="molecule type" value="mRNA"/>
</dbReference>
<dbReference type="EMBL" id="AY087256">
    <property type="protein sequence ID" value="AAM67324.1"/>
    <property type="molecule type" value="mRNA"/>
</dbReference>
<dbReference type="PIR" id="T04737">
    <property type="entry name" value="T04737"/>
</dbReference>
<dbReference type="PIR" id="T52175">
    <property type="entry name" value="T52175"/>
</dbReference>
<dbReference type="RefSeq" id="NP_195459.1">
    <property type="nucleotide sequence ID" value="NM_119906.3"/>
</dbReference>
<dbReference type="SMR" id="O65790"/>
<dbReference type="FunCoup" id="O65790">
    <property type="interactions" value="428"/>
</dbReference>
<dbReference type="STRING" id="3702.O65790"/>
<dbReference type="iPTMnet" id="O65790"/>
<dbReference type="PaxDb" id="3702-AT4G37430.1"/>
<dbReference type="ProteomicsDB" id="239168"/>
<dbReference type="EnsemblPlants" id="AT4G37430.1">
    <property type="protein sequence ID" value="AT4G37430.1"/>
    <property type="gene ID" value="AT4G37430"/>
</dbReference>
<dbReference type="GeneID" id="829897"/>
<dbReference type="Gramene" id="AT4G37430.1">
    <property type="protein sequence ID" value="AT4G37430.1"/>
    <property type="gene ID" value="AT4G37430"/>
</dbReference>
<dbReference type="KEGG" id="ath:AT4G37430"/>
<dbReference type="Araport" id="AT4G37430"/>
<dbReference type="TAIR" id="AT4G37430">
    <property type="gene designation" value="CYP91A2"/>
</dbReference>
<dbReference type="eggNOG" id="KOG0156">
    <property type="taxonomic scope" value="Eukaryota"/>
</dbReference>
<dbReference type="HOGENOM" id="CLU_001570_4_0_1"/>
<dbReference type="InParanoid" id="O65790"/>
<dbReference type="OMA" id="MMSMMLA"/>
<dbReference type="OrthoDB" id="1055148at2759"/>
<dbReference type="PhylomeDB" id="O65790"/>
<dbReference type="BioCyc" id="ARA:AT4G37430-MONOMER"/>
<dbReference type="PRO" id="PR:O65790"/>
<dbReference type="Proteomes" id="UP000006548">
    <property type="component" value="Chromosome 4"/>
</dbReference>
<dbReference type="ExpressionAtlas" id="O65790">
    <property type="expression patterns" value="baseline and differential"/>
</dbReference>
<dbReference type="GO" id="GO:0005783">
    <property type="term" value="C:endoplasmic reticulum"/>
    <property type="evidence" value="ECO:0007005"/>
    <property type="project" value="TAIR"/>
</dbReference>
<dbReference type="GO" id="GO:0016020">
    <property type="term" value="C:membrane"/>
    <property type="evidence" value="ECO:0007669"/>
    <property type="project" value="UniProtKB-SubCell"/>
</dbReference>
<dbReference type="GO" id="GO:0020037">
    <property type="term" value="F:heme binding"/>
    <property type="evidence" value="ECO:0007669"/>
    <property type="project" value="InterPro"/>
</dbReference>
<dbReference type="GO" id="GO:0005506">
    <property type="term" value="F:iron ion binding"/>
    <property type="evidence" value="ECO:0007669"/>
    <property type="project" value="InterPro"/>
</dbReference>
<dbReference type="GO" id="GO:0004497">
    <property type="term" value="F:monooxygenase activity"/>
    <property type="evidence" value="ECO:0000314"/>
    <property type="project" value="TAIR"/>
</dbReference>
<dbReference type="GO" id="GO:0016705">
    <property type="term" value="F:oxidoreductase activity, acting on paired donors, with incorporation or reduction of molecular oxygen"/>
    <property type="evidence" value="ECO:0007669"/>
    <property type="project" value="InterPro"/>
</dbReference>
<dbReference type="GO" id="GO:0042343">
    <property type="term" value="P:indole glucosinolate metabolic process"/>
    <property type="evidence" value="ECO:0000314"/>
    <property type="project" value="TAIR"/>
</dbReference>
<dbReference type="CDD" id="cd20653">
    <property type="entry name" value="CYP81"/>
    <property type="match status" value="1"/>
</dbReference>
<dbReference type="FunFam" id="1.10.630.10:FF:000023">
    <property type="entry name" value="Cytochrome P450 family protein"/>
    <property type="match status" value="1"/>
</dbReference>
<dbReference type="Gene3D" id="1.10.630.10">
    <property type="entry name" value="Cytochrome P450"/>
    <property type="match status" value="1"/>
</dbReference>
<dbReference type="InterPro" id="IPR001128">
    <property type="entry name" value="Cyt_P450"/>
</dbReference>
<dbReference type="InterPro" id="IPR017972">
    <property type="entry name" value="Cyt_P450_CS"/>
</dbReference>
<dbReference type="InterPro" id="IPR002401">
    <property type="entry name" value="Cyt_P450_E_grp-I"/>
</dbReference>
<dbReference type="InterPro" id="IPR036396">
    <property type="entry name" value="Cyt_P450_sf"/>
</dbReference>
<dbReference type="InterPro" id="IPR050651">
    <property type="entry name" value="Plant_Cytochrome_P450_Monoox"/>
</dbReference>
<dbReference type="PANTHER" id="PTHR47947">
    <property type="entry name" value="CYTOCHROME P450 82C3-RELATED"/>
    <property type="match status" value="1"/>
</dbReference>
<dbReference type="PANTHER" id="PTHR47947:SF62">
    <property type="entry name" value="CYTOCHROME P450, FAMILY 81, SUBFAMILY D, POLYPEPTIDE 5"/>
    <property type="match status" value="1"/>
</dbReference>
<dbReference type="Pfam" id="PF00067">
    <property type="entry name" value="p450"/>
    <property type="match status" value="1"/>
</dbReference>
<dbReference type="PRINTS" id="PR00463">
    <property type="entry name" value="EP450I"/>
</dbReference>
<dbReference type="PRINTS" id="PR00385">
    <property type="entry name" value="P450"/>
</dbReference>
<dbReference type="SUPFAM" id="SSF48264">
    <property type="entry name" value="Cytochrome P450"/>
    <property type="match status" value="1"/>
</dbReference>
<dbReference type="PROSITE" id="PS00086">
    <property type="entry name" value="CYTOCHROME_P450"/>
    <property type="match status" value="1"/>
</dbReference>
<proteinExistence type="evidence at transcript level"/>
<name>C81F1_ARATH</name>
<accession>O65790</accession>
<accession>Q7FBW2</accession>
<accession>Q8LBE7</accession>
<accession>Q9SZU3</accession>
<reference key="1">
    <citation type="journal article" date="1998" name="Plant Mol. Biol.">
        <title>Cytochrome P450 superfamily in Arabidopsis thaliana: isolation of cDNAs, differential expression, and RFLP mapping of multiple cytochromes P450.</title>
        <authorList>
            <person name="Mizutani M."/>
            <person name="Ward E."/>
            <person name="Ohta D."/>
        </authorList>
    </citation>
    <scope>NUCLEOTIDE SEQUENCE [MRNA]</scope>
    <source>
        <strain>cv. Columbia</strain>
        <tissue>Seedling</tissue>
    </source>
</reference>
<reference key="2">
    <citation type="journal article" date="1999" name="Nature">
        <title>Sequence and analysis of chromosome 4 of the plant Arabidopsis thaliana.</title>
        <authorList>
            <person name="Mayer K.F.X."/>
            <person name="Schueller C."/>
            <person name="Wambutt R."/>
            <person name="Murphy G."/>
            <person name="Volckaert G."/>
            <person name="Pohl T."/>
            <person name="Duesterhoeft A."/>
            <person name="Stiekema W."/>
            <person name="Entian K.-D."/>
            <person name="Terryn N."/>
            <person name="Harris B."/>
            <person name="Ansorge W."/>
            <person name="Brandt P."/>
            <person name="Grivell L.A."/>
            <person name="Rieger M."/>
            <person name="Weichselgartner M."/>
            <person name="de Simone V."/>
            <person name="Obermaier B."/>
            <person name="Mache R."/>
            <person name="Mueller M."/>
            <person name="Kreis M."/>
            <person name="Delseny M."/>
            <person name="Puigdomenech P."/>
            <person name="Watson M."/>
            <person name="Schmidtheini T."/>
            <person name="Reichert B."/>
            <person name="Portetelle D."/>
            <person name="Perez-Alonso M."/>
            <person name="Boutry M."/>
            <person name="Bancroft I."/>
            <person name="Vos P."/>
            <person name="Hoheisel J."/>
            <person name="Zimmermann W."/>
            <person name="Wedler H."/>
            <person name="Ridley P."/>
            <person name="Langham S.-A."/>
            <person name="McCullagh B."/>
            <person name="Bilham L."/>
            <person name="Robben J."/>
            <person name="van der Schueren J."/>
            <person name="Grymonprez B."/>
            <person name="Chuang Y.-J."/>
            <person name="Vandenbussche F."/>
            <person name="Braeken M."/>
            <person name="Weltjens I."/>
            <person name="Voet M."/>
            <person name="Bastiaens I."/>
            <person name="Aert R."/>
            <person name="Defoor E."/>
            <person name="Weitzenegger T."/>
            <person name="Bothe G."/>
            <person name="Ramsperger U."/>
            <person name="Hilbert H."/>
            <person name="Braun M."/>
            <person name="Holzer E."/>
            <person name="Brandt A."/>
            <person name="Peters S."/>
            <person name="van Staveren M."/>
            <person name="Dirkse W."/>
            <person name="Mooijman P."/>
            <person name="Klein Lankhorst R."/>
            <person name="Rose M."/>
            <person name="Hauf J."/>
            <person name="Koetter P."/>
            <person name="Berneiser S."/>
            <person name="Hempel S."/>
            <person name="Feldpausch M."/>
            <person name="Lamberth S."/>
            <person name="Van den Daele H."/>
            <person name="De Keyser A."/>
            <person name="Buysshaert C."/>
            <person name="Gielen J."/>
            <person name="Villarroel R."/>
            <person name="De Clercq R."/>
            <person name="van Montagu M."/>
            <person name="Rogers J."/>
            <person name="Cronin A."/>
            <person name="Quail M.A."/>
            <person name="Bray-Allen S."/>
            <person name="Clark L."/>
            <person name="Doggett J."/>
            <person name="Hall S."/>
            <person name="Kay M."/>
            <person name="Lennard N."/>
            <person name="McLay K."/>
            <person name="Mayes R."/>
            <person name="Pettett A."/>
            <person name="Rajandream M.A."/>
            <person name="Lyne M."/>
            <person name="Benes V."/>
            <person name="Rechmann S."/>
            <person name="Borkova D."/>
            <person name="Bloecker H."/>
            <person name="Scharfe M."/>
            <person name="Grimm M."/>
            <person name="Loehnert T.-H."/>
            <person name="Dose S."/>
            <person name="de Haan M."/>
            <person name="Maarse A.C."/>
            <person name="Schaefer M."/>
            <person name="Mueller-Auer S."/>
            <person name="Gabel C."/>
            <person name="Fuchs M."/>
            <person name="Fartmann B."/>
            <person name="Granderath K."/>
            <person name="Dauner D."/>
            <person name="Herzl A."/>
            <person name="Neumann S."/>
            <person name="Argiriou A."/>
            <person name="Vitale D."/>
            <person name="Liguori R."/>
            <person name="Piravandi E."/>
            <person name="Massenet O."/>
            <person name="Quigley F."/>
            <person name="Clabauld G."/>
            <person name="Muendlein A."/>
            <person name="Felber R."/>
            <person name="Schnabl S."/>
            <person name="Hiller R."/>
            <person name="Schmidt W."/>
            <person name="Lecharny A."/>
            <person name="Aubourg S."/>
            <person name="Chefdor F."/>
            <person name="Cooke R."/>
            <person name="Berger C."/>
            <person name="Monfort A."/>
            <person name="Casacuberta E."/>
            <person name="Gibbons T."/>
            <person name="Weber N."/>
            <person name="Vandenbol M."/>
            <person name="Bargues M."/>
            <person name="Terol J."/>
            <person name="Torres A."/>
            <person name="Perez-Perez A."/>
            <person name="Purnelle B."/>
            <person name="Bent E."/>
            <person name="Johnson S."/>
            <person name="Tacon D."/>
            <person name="Jesse T."/>
            <person name="Heijnen L."/>
            <person name="Schwarz S."/>
            <person name="Scholler P."/>
            <person name="Heber S."/>
            <person name="Francs P."/>
            <person name="Bielke C."/>
            <person name="Frishman D."/>
            <person name="Haase D."/>
            <person name="Lemcke K."/>
            <person name="Mewes H.-W."/>
            <person name="Stocker S."/>
            <person name="Zaccaria P."/>
            <person name="Bevan M."/>
            <person name="Wilson R.K."/>
            <person name="de la Bastide M."/>
            <person name="Habermann K."/>
            <person name="Parnell L."/>
            <person name="Dedhia N."/>
            <person name="Gnoj L."/>
            <person name="Schutz K."/>
            <person name="Huang E."/>
            <person name="Spiegel L."/>
            <person name="Sekhon M."/>
            <person name="Murray J."/>
            <person name="Sheet P."/>
            <person name="Cordes M."/>
            <person name="Abu-Threideh J."/>
            <person name="Stoneking T."/>
            <person name="Kalicki J."/>
            <person name="Graves T."/>
            <person name="Harmon G."/>
            <person name="Edwards J."/>
            <person name="Latreille P."/>
            <person name="Courtney L."/>
            <person name="Cloud J."/>
            <person name="Abbott A."/>
            <person name="Scott K."/>
            <person name="Johnson D."/>
            <person name="Minx P."/>
            <person name="Bentley D."/>
            <person name="Fulton B."/>
            <person name="Miller N."/>
            <person name="Greco T."/>
            <person name="Kemp K."/>
            <person name="Kramer J."/>
            <person name="Fulton L."/>
            <person name="Mardis E."/>
            <person name="Dante M."/>
            <person name="Pepin K."/>
            <person name="Hillier L.W."/>
            <person name="Nelson J."/>
            <person name="Spieth J."/>
            <person name="Ryan E."/>
            <person name="Andrews S."/>
            <person name="Geisel C."/>
            <person name="Layman D."/>
            <person name="Du H."/>
            <person name="Ali J."/>
            <person name="Berghoff A."/>
            <person name="Jones K."/>
            <person name="Drone K."/>
            <person name="Cotton M."/>
            <person name="Joshu C."/>
            <person name="Antonoiu B."/>
            <person name="Zidanic M."/>
            <person name="Strong C."/>
            <person name="Sun H."/>
            <person name="Lamar B."/>
            <person name="Yordan C."/>
            <person name="Ma P."/>
            <person name="Zhong J."/>
            <person name="Preston R."/>
            <person name="Vil D."/>
            <person name="Shekher M."/>
            <person name="Matero A."/>
            <person name="Shah R."/>
            <person name="Swaby I.K."/>
            <person name="O'Shaughnessy A."/>
            <person name="Rodriguez M."/>
            <person name="Hoffman J."/>
            <person name="Till S."/>
            <person name="Granat S."/>
            <person name="Shohdy N."/>
            <person name="Hasegawa A."/>
            <person name="Hameed A."/>
            <person name="Lodhi M."/>
            <person name="Johnson A."/>
            <person name="Chen E."/>
            <person name="Marra M.A."/>
            <person name="Martienssen R."/>
            <person name="McCombie W.R."/>
        </authorList>
    </citation>
    <scope>NUCLEOTIDE SEQUENCE [LARGE SCALE GENOMIC DNA]</scope>
    <source>
        <strain>cv. Columbia</strain>
    </source>
</reference>
<reference key="3">
    <citation type="journal article" date="2017" name="Plant J.">
        <title>Araport11: a complete reannotation of the Arabidopsis thaliana reference genome.</title>
        <authorList>
            <person name="Cheng C.Y."/>
            <person name="Krishnakumar V."/>
            <person name="Chan A.P."/>
            <person name="Thibaud-Nissen F."/>
            <person name="Schobel S."/>
            <person name="Town C.D."/>
        </authorList>
    </citation>
    <scope>GENOME REANNOTATION</scope>
    <source>
        <strain>cv. Columbia</strain>
    </source>
</reference>
<reference key="4">
    <citation type="journal article" date="2003" name="Science">
        <title>Empirical analysis of transcriptional activity in the Arabidopsis genome.</title>
        <authorList>
            <person name="Yamada K."/>
            <person name="Lim J."/>
            <person name="Dale J.M."/>
            <person name="Chen H."/>
            <person name="Shinn P."/>
            <person name="Palm C.J."/>
            <person name="Southwick A.M."/>
            <person name="Wu H.C."/>
            <person name="Kim C.J."/>
            <person name="Nguyen M."/>
            <person name="Pham P.K."/>
            <person name="Cheuk R.F."/>
            <person name="Karlin-Newmann G."/>
            <person name="Liu S.X."/>
            <person name="Lam B."/>
            <person name="Sakano H."/>
            <person name="Wu T."/>
            <person name="Yu G."/>
            <person name="Miranda M."/>
            <person name="Quach H.L."/>
            <person name="Tripp M."/>
            <person name="Chang C.H."/>
            <person name="Lee J.M."/>
            <person name="Toriumi M.J."/>
            <person name="Chan M.M."/>
            <person name="Tang C.C."/>
            <person name="Onodera C.S."/>
            <person name="Deng J.M."/>
            <person name="Akiyama K."/>
            <person name="Ansari Y."/>
            <person name="Arakawa T."/>
            <person name="Banh J."/>
            <person name="Banno F."/>
            <person name="Bowser L."/>
            <person name="Brooks S.Y."/>
            <person name="Carninci P."/>
            <person name="Chao Q."/>
            <person name="Choy N."/>
            <person name="Enju A."/>
            <person name="Goldsmith A.D."/>
            <person name="Gurjal M."/>
            <person name="Hansen N.F."/>
            <person name="Hayashizaki Y."/>
            <person name="Johnson-Hopson C."/>
            <person name="Hsuan V.W."/>
            <person name="Iida K."/>
            <person name="Karnes M."/>
            <person name="Khan S."/>
            <person name="Koesema E."/>
            <person name="Ishida J."/>
            <person name="Jiang P.X."/>
            <person name="Jones T."/>
            <person name="Kawai J."/>
            <person name="Kamiya A."/>
            <person name="Meyers C."/>
            <person name="Nakajima M."/>
            <person name="Narusaka M."/>
            <person name="Seki M."/>
            <person name="Sakurai T."/>
            <person name="Satou M."/>
            <person name="Tamse R."/>
            <person name="Vaysberg M."/>
            <person name="Wallender E.K."/>
            <person name="Wong C."/>
            <person name="Yamamura Y."/>
            <person name="Yuan S."/>
            <person name="Shinozaki K."/>
            <person name="Davis R.W."/>
            <person name="Theologis A."/>
            <person name="Ecker J.R."/>
        </authorList>
    </citation>
    <scope>NUCLEOTIDE SEQUENCE [LARGE SCALE MRNA]</scope>
    <source>
        <strain>cv. Columbia</strain>
    </source>
</reference>
<reference key="5">
    <citation type="submission" date="2002-03" db="EMBL/GenBank/DDBJ databases">
        <title>Full-length cDNA from Arabidopsis thaliana.</title>
        <authorList>
            <person name="Brover V.V."/>
            <person name="Troukhan M.E."/>
            <person name="Alexandrov N.A."/>
            <person name="Lu Y.-P."/>
            <person name="Flavell R.B."/>
            <person name="Feldmann K.A."/>
        </authorList>
    </citation>
    <scope>NUCLEOTIDE SEQUENCE [LARGE SCALE MRNA]</scope>
</reference>
<reference key="6">
    <citation type="journal article" date="2011" name="Plant Cell">
        <title>Metabolic engineering in Nicotiana benthamiana reveals key enzyme functions in Arabidopsis indole glucosinolate modification.</title>
        <authorList>
            <person name="Pfalz M."/>
            <person name="Mikkelsen M.D."/>
            <person name="Bednarek P."/>
            <person name="Olsen C.E."/>
            <person name="Halkier B.A."/>
            <person name="Kroymann J."/>
        </authorList>
    </citation>
    <scope>FUNCTION</scope>
</reference>
<organism>
    <name type="scientific">Arabidopsis thaliana</name>
    <name type="common">Mouse-ear cress</name>
    <dbReference type="NCBI Taxonomy" id="3702"/>
    <lineage>
        <taxon>Eukaryota</taxon>
        <taxon>Viridiplantae</taxon>
        <taxon>Streptophyta</taxon>
        <taxon>Embryophyta</taxon>
        <taxon>Tracheophyta</taxon>
        <taxon>Spermatophyta</taxon>
        <taxon>Magnoliopsida</taxon>
        <taxon>eudicotyledons</taxon>
        <taxon>Gunneridae</taxon>
        <taxon>Pentapetalae</taxon>
        <taxon>rosids</taxon>
        <taxon>malvids</taxon>
        <taxon>Brassicales</taxon>
        <taxon>Brassicaceae</taxon>
        <taxon>Camelineae</taxon>
        <taxon>Arabidopsis</taxon>
    </lineage>
</organism>
<sequence length="500" mass="57555">MLYFILLPLLFLVISYKFLYSKTQRFNLPPGPPSRPFVGHLHLMKPPIHRLLQRYSNQYGPIFSLRFGSRRVVVITSPSLAQESFTGQNDIVLSSRPLQLTAKYVAYNHTTVGTAPYGDHWRNLRRICSQEILSSHRLINFQHIRKDEILRMLTRLSRYTQTSNESNDFTHIELEPLLSDLTFNNIVRMVTGKRYYGDDVNNKEEAELFKKLVYDIAMYSGANHSADYLPILKLFGNKFEKEVKAIGKSMDDILQRLLDECRRDKEGNTMVNHLISLQQQQPEYYTDVIIKGLMMSMMLAGTETSAVTLEWAMANLLRNPEVLEKARSEIDEKIGKDRLIDESDIAVLPYLQNVVSETFRLFPVAPFLIPRSPTDDMKIGGYDVPRDTIVMVNAWAIHRDPEIWEEPEKFNPDRYNDGCGSDYYVYKLMPFGNGRRTCPGAGLGQRIVTLALGSLIQCFEWENVKGEEMDMSESTGLGMRKMDPLRAMCRPRPIMSKLLL</sequence>
<comment type="function">
    <text evidence="4">Involved in indole glucosinolate biosynthesis. Catalyzes hydroxylation reactions of the glucosinolate indole ring. Converts indol-3-yl-methylglucosinolate (I3M) to 4-hydroxy-indol-3-yl-methylglucosinolate (4OH-I3M) and/or 1-hydroxy-indol-3-yl-methylglucosinolate (1OH-I3M) intermediates. These hydroxy intermediates are converted to 4-methoxy-indol-3-yl-methylglucosinolate (4MO-I3M) and 1-methoxy-indol-3-yl-methylglucosinolate (1MO-I3M) by indole glucosinolate methyltransferase 1 and 2 (IGMT1 and IGMT2).</text>
</comment>
<comment type="cofactor">
    <cofactor evidence="1">
        <name>heme</name>
        <dbReference type="ChEBI" id="CHEBI:30413"/>
    </cofactor>
</comment>
<comment type="pathway">
    <text evidence="6">Secondary metabolite biosynthesis.</text>
</comment>
<comment type="subcellular location">
    <subcellularLocation>
        <location evidence="6">Membrane</location>
        <topology evidence="6">Single-pass membrane protein</topology>
    </subcellularLocation>
</comment>
<comment type="similarity">
    <text evidence="6">Belongs to the cytochrome P450 family.</text>
</comment>
<protein>
    <recommendedName>
        <fullName evidence="6">Cytochrome P450 81F1</fullName>
        <ecNumber evidence="6">1.14.-.-</ecNumber>
    </recommendedName>
</protein>
<gene>
    <name evidence="5" type="primary">CYP81F1</name>
    <name type="synonym">CYP91A2</name>
    <name type="ordered locus">At4g37430</name>
    <name type="ORF">F6G17.80</name>
</gene>
<feature type="chain" id="PRO_0000052161" description="Cytochrome P450 81F1">
    <location>
        <begin position="1"/>
        <end position="500"/>
    </location>
</feature>
<feature type="transmembrane region" description="Helical" evidence="3">
    <location>
        <begin position="1"/>
        <end position="21"/>
    </location>
</feature>
<feature type="binding site" description="axial binding residue" evidence="1">
    <location>
        <position position="438"/>
    </location>
    <ligand>
        <name>heme</name>
        <dbReference type="ChEBI" id="CHEBI:30413"/>
    </ligand>
    <ligandPart>
        <name>Fe</name>
        <dbReference type="ChEBI" id="CHEBI:18248"/>
    </ligandPart>
</feature>
<feature type="cross-link" description="Glycyl lysine isopeptide (Lys-Gly) (interchain with G-Cter in ubiquitin)" evidence="2">
    <location>
        <position position="248"/>
    </location>
</feature>
<feature type="sequence conflict" description="In Ref. 5; AAM67324." evidence="6" ref="5">
    <original>A</original>
    <variation>S</variation>
    <location>
        <position position="102"/>
    </location>
</feature>
<feature type="sequence conflict" description="In Ref. 1; BAA28539." evidence="6" ref="1">
    <original>A</original>
    <variation>V</variation>
    <location>
        <position position="106"/>
    </location>
</feature>
<feature type="sequence conflict" description="In Ref. 1; BAA28539." evidence="6" ref="1">
    <original>I</original>
    <variation>M</variation>
    <location>
        <position position="127"/>
    </location>
</feature>
<feature type="sequence conflict" description="In Ref. 1; BAA28539." evidence="6" ref="1">
    <original>N</original>
    <variation>I</variation>
    <location>
        <position position="140"/>
    </location>
</feature>
<feature type="sequence conflict" description="In Ref. 1; BAA28539." evidence="6" ref="1">
    <original>S</original>
    <variation>T</variation>
    <location>
        <position position="454"/>
    </location>
</feature>
<feature type="sequence conflict" description="In Ref. 5; AAM67324." evidence="6" ref="5">
    <original>M</original>
    <variation>I</variation>
    <location>
        <position position="495"/>
    </location>
</feature>